<comment type="function">
    <text evidence="1">Catalyzes the specific phosphorylation of 1,6-anhydro-N-acetylmuramic acid (anhMurNAc) with the simultaneous cleavage of the 1,6-anhydro ring, generating MurNAc-6-P. Is required for the utilization of anhMurNAc either imported from the medium or derived from its own cell wall murein, and thus plays a role in cell wall recycling.</text>
</comment>
<comment type="catalytic activity">
    <reaction evidence="1">
        <text>1,6-anhydro-N-acetyl-beta-muramate + ATP + H2O = N-acetyl-D-muramate 6-phosphate + ADP + H(+)</text>
        <dbReference type="Rhea" id="RHEA:24952"/>
        <dbReference type="ChEBI" id="CHEBI:15377"/>
        <dbReference type="ChEBI" id="CHEBI:15378"/>
        <dbReference type="ChEBI" id="CHEBI:30616"/>
        <dbReference type="ChEBI" id="CHEBI:58690"/>
        <dbReference type="ChEBI" id="CHEBI:58722"/>
        <dbReference type="ChEBI" id="CHEBI:456216"/>
        <dbReference type="EC" id="2.7.1.170"/>
    </reaction>
</comment>
<comment type="pathway">
    <text evidence="1">Amino-sugar metabolism; 1,6-anhydro-N-acetylmuramate degradation.</text>
</comment>
<comment type="pathway">
    <text evidence="1">Cell wall biogenesis; peptidoglycan recycling.</text>
</comment>
<comment type="similarity">
    <text evidence="1">Belongs to the anhydro-N-acetylmuramic acid kinase family.</text>
</comment>
<gene>
    <name evidence="1" type="primary">anmK</name>
    <name type="ordered locus">Sden_2812</name>
</gene>
<reference key="1">
    <citation type="submission" date="2006-03" db="EMBL/GenBank/DDBJ databases">
        <title>Complete sequence of Shewanella denitrificans OS217.</title>
        <authorList>
            <consortium name="US DOE Joint Genome Institute"/>
            <person name="Copeland A."/>
            <person name="Lucas S."/>
            <person name="Lapidus A."/>
            <person name="Barry K."/>
            <person name="Detter J.C."/>
            <person name="Glavina del Rio T."/>
            <person name="Hammon N."/>
            <person name="Israni S."/>
            <person name="Dalin E."/>
            <person name="Tice H."/>
            <person name="Pitluck S."/>
            <person name="Brettin T."/>
            <person name="Bruce D."/>
            <person name="Han C."/>
            <person name="Tapia R."/>
            <person name="Gilna P."/>
            <person name="Kiss H."/>
            <person name="Schmutz J."/>
            <person name="Larimer F."/>
            <person name="Land M."/>
            <person name="Hauser L."/>
            <person name="Kyrpides N."/>
            <person name="Lykidis A."/>
            <person name="Richardson P."/>
        </authorList>
    </citation>
    <scope>NUCLEOTIDE SEQUENCE [LARGE SCALE GENOMIC DNA]</scope>
    <source>
        <strain>OS217 / ATCC BAA-1090 / DSM 15013</strain>
    </source>
</reference>
<organism>
    <name type="scientific">Shewanella denitrificans (strain OS217 / ATCC BAA-1090 / DSM 15013)</name>
    <dbReference type="NCBI Taxonomy" id="318161"/>
    <lineage>
        <taxon>Bacteria</taxon>
        <taxon>Pseudomonadati</taxon>
        <taxon>Pseudomonadota</taxon>
        <taxon>Gammaproteobacteria</taxon>
        <taxon>Alteromonadales</taxon>
        <taxon>Shewanellaceae</taxon>
        <taxon>Shewanella</taxon>
    </lineage>
</organism>
<protein>
    <recommendedName>
        <fullName evidence="1">Anhydro-N-acetylmuramic acid kinase</fullName>
        <ecNumber evidence="1">2.7.1.170</ecNumber>
    </recommendedName>
    <alternativeName>
        <fullName evidence="1">AnhMurNAc kinase</fullName>
    </alternativeName>
</protein>
<keyword id="KW-0067">ATP-binding</keyword>
<keyword id="KW-0119">Carbohydrate metabolism</keyword>
<keyword id="KW-0418">Kinase</keyword>
<keyword id="KW-0547">Nucleotide-binding</keyword>
<keyword id="KW-1185">Reference proteome</keyword>
<keyword id="KW-0808">Transferase</keyword>
<accession>Q12KD5</accession>
<evidence type="ECO:0000255" key="1">
    <source>
        <dbReference type="HAMAP-Rule" id="MF_01270"/>
    </source>
</evidence>
<sequence>MSKPEYFIGLMSGTSMDGVDAVLVDFSQAKPQLIAGHTQAIPKHLLKGLQRLCNPAADEINRLGRLDRAVGSLFADAVNALLEKTNIPKSQIIAIGSHGQTVRHMPNLEVGFTLQIGDPNTIAVETGIDVIADFRRKDIALGGQGAPLVPAFHQQVFAEKDQIRVILNIGGIANVTYLPGNSEQVLGFDTGPGNTLIDAYILQNLEQAFDEDGQWADSGNSNQALLTQMLSHPYFSLHYPKSTGRELFNQAWLEQQLANFSHLDAEDIQSTLLDLTCHSIANDINKLAPKGQLFVCGGGALNGALMKRLTQLVPGYQLQTTSALGVDAKWVEGIAFAWLAMRHHHNLPANLPAVTGASKSAVLGGRYSAK</sequence>
<dbReference type="EC" id="2.7.1.170" evidence="1"/>
<dbReference type="EMBL" id="CP000302">
    <property type="protein sequence ID" value="ABE56091.1"/>
    <property type="molecule type" value="Genomic_DNA"/>
</dbReference>
<dbReference type="RefSeq" id="WP_011497241.1">
    <property type="nucleotide sequence ID" value="NC_007954.1"/>
</dbReference>
<dbReference type="SMR" id="Q12KD5"/>
<dbReference type="STRING" id="318161.Sden_2812"/>
<dbReference type="KEGG" id="sdn:Sden_2812"/>
<dbReference type="eggNOG" id="COG2377">
    <property type="taxonomic scope" value="Bacteria"/>
</dbReference>
<dbReference type="HOGENOM" id="CLU_038782_0_0_6"/>
<dbReference type="OrthoDB" id="9763949at2"/>
<dbReference type="UniPathway" id="UPA00343"/>
<dbReference type="UniPathway" id="UPA00544"/>
<dbReference type="Proteomes" id="UP000001982">
    <property type="component" value="Chromosome"/>
</dbReference>
<dbReference type="GO" id="GO:0005524">
    <property type="term" value="F:ATP binding"/>
    <property type="evidence" value="ECO:0007669"/>
    <property type="project" value="UniProtKB-UniRule"/>
</dbReference>
<dbReference type="GO" id="GO:0016301">
    <property type="term" value="F:kinase activity"/>
    <property type="evidence" value="ECO:0007669"/>
    <property type="project" value="UniProtKB-KW"/>
</dbReference>
<dbReference type="GO" id="GO:0016773">
    <property type="term" value="F:phosphotransferase activity, alcohol group as acceptor"/>
    <property type="evidence" value="ECO:0007669"/>
    <property type="project" value="UniProtKB-UniRule"/>
</dbReference>
<dbReference type="GO" id="GO:0097175">
    <property type="term" value="P:1,6-anhydro-N-acetyl-beta-muramic acid catabolic process"/>
    <property type="evidence" value="ECO:0007669"/>
    <property type="project" value="UniProtKB-UniRule"/>
</dbReference>
<dbReference type="GO" id="GO:0006040">
    <property type="term" value="P:amino sugar metabolic process"/>
    <property type="evidence" value="ECO:0007669"/>
    <property type="project" value="InterPro"/>
</dbReference>
<dbReference type="GO" id="GO:0009254">
    <property type="term" value="P:peptidoglycan turnover"/>
    <property type="evidence" value="ECO:0007669"/>
    <property type="project" value="UniProtKB-UniRule"/>
</dbReference>
<dbReference type="CDD" id="cd24050">
    <property type="entry name" value="ASKHA_NBD_ANMK"/>
    <property type="match status" value="1"/>
</dbReference>
<dbReference type="Gene3D" id="3.30.420.40">
    <property type="match status" value="2"/>
</dbReference>
<dbReference type="HAMAP" id="MF_01270">
    <property type="entry name" value="AnhMurNAc_kinase"/>
    <property type="match status" value="1"/>
</dbReference>
<dbReference type="InterPro" id="IPR005338">
    <property type="entry name" value="Anhydro_N_Ac-Mur_kinase"/>
</dbReference>
<dbReference type="InterPro" id="IPR043129">
    <property type="entry name" value="ATPase_NBD"/>
</dbReference>
<dbReference type="NCBIfam" id="NF007139">
    <property type="entry name" value="PRK09585.1-3"/>
    <property type="match status" value="1"/>
</dbReference>
<dbReference type="NCBIfam" id="NF007148">
    <property type="entry name" value="PRK09585.3-2"/>
    <property type="match status" value="1"/>
</dbReference>
<dbReference type="PANTHER" id="PTHR30605">
    <property type="entry name" value="ANHYDRO-N-ACETYLMURAMIC ACID KINASE"/>
    <property type="match status" value="1"/>
</dbReference>
<dbReference type="PANTHER" id="PTHR30605:SF0">
    <property type="entry name" value="ANHYDRO-N-ACETYLMURAMIC ACID KINASE"/>
    <property type="match status" value="1"/>
</dbReference>
<dbReference type="Pfam" id="PF03702">
    <property type="entry name" value="AnmK"/>
    <property type="match status" value="1"/>
</dbReference>
<dbReference type="SUPFAM" id="SSF53067">
    <property type="entry name" value="Actin-like ATPase domain"/>
    <property type="match status" value="1"/>
</dbReference>
<proteinExistence type="inferred from homology"/>
<feature type="chain" id="PRO_1000067361" description="Anhydro-N-acetylmuramic acid kinase">
    <location>
        <begin position="1"/>
        <end position="370"/>
    </location>
</feature>
<feature type="binding site" evidence="1">
    <location>
        <begin position="13"/>
        <end position="20"/>
    </location>
    <ligand>
        <name>ATP</name>
        <dbReference type="ChEBI" id="CHEBI:30616"/>
    </ligand>
</feature>
<name>ANMK_SHEDO</name>